<feature type="chain" id="PRO_0000410428" description="dITP/XTP pyrophosphatase">
    <location>
        <begin position="1"/>
        <end position="186"/>
    </location>
</feature>
<feature type="active site" description="Proton acceptor" evidence="1">
    <location>
        <position position="65"/>
    </location>
</feature>
<feature type="binding site" evidence="2 3 5 6">
    <location>
        <begin position="7"/>
        <end position="12"/>
    </location>
    <ligand>
        <name>substrate</name>
    </ligand>
</feature>
<feature type="binding site" evidence="4 7">
    <location>
        <position position="36"/>
    </location>
    <ligand>
        <name>Mg(2+)</name>
        <dbReference type="ChEBI" id="CHEBI:18420"/>
    </ligand>
</feature>
<feature type="binding site" evidence="4 7">
    <location>
        <position position="65"/>
    </location>
    <ligand>
        <name>Mg(2+)</name>
        <dbReference type="ChEBI" id="CHEBI:18420"/>
    </ligand>
</feature>
<feature type="binding site" evidence="2 3 5 6">
    <location>
        <position position="66"/>
    </location>
    <ligand>
        <name>substrate</name>
    </ligand>
</feature>
<feature type="binding site" evidence="2 3 5 6">
    <location>
        <begin position="140"/>
        <end position="143"/>
    </location>
    <ligand>
        <name>substrate</name>
    </ligand>
</feature>
<feature type="binding site" evidence="2 3 5 6">
    <location>
        <position position="163"/>
    </location>
    <ligand>
        <name>substrate</name>
    </ligand>
</feature>
<feature type="binding site" evidence="2 3 5 6">
    <location>
        <begin position="168"/>
        <end position="169"/>
    </location>
    <ligand>
        <name>substrate</name>
    </ligand>
</feature>
<feature type="strand" evidence="8">
    <location>
        <begin position="2"/>
        <end position="6"/>
    </location>
</feature>
<feature type="helix" evidence="8">
    <location>
        <begin position="10"/>
        <end position="21"/>
    </location>
</feature>
<feature type="turn" evidence="8">
    <location>
        <begin position="22"/>
        <end position="24"/>
    </location>
</feature>
<feature type="strand" evidence="8">
    <location>
        <begin position="26"/>
        <end position="30"/>
    </location>
</feature>
<feature type="helix" evidence="8">
    <location>
        <begin position="42"/>
        <end position="53"/>
    </location>
</feature>
<feature type="turn" evidence="8">
    <location>
        <begin position="54"/>
        <end position="56"/>
    </location>
</feature>
<feature type="strand" evidence="8">
    <location>
        <begin position="59"/>
        <end position="70"/>
    </location>
</feature>
<feature type="helix" evidence="8">
    <location>
        <begin position="71"/>
        <end position="73"/>
    </location>
</feature>
<feature type="turn" evidence="8">
    <location>
        <begin position="74"/>
        <end position="76"/>
    </location>
</feature>
<feature type="helix" evidence="8">
    <location>
        <begin position="78"/>
        <end position="80"/>
    </location>
</feature>
<feature type="helix" evidence="8">
    <location>
        <begin position="81"/>
        <end position="87"/>
    </location>
</feature>
<feature type="helix" evidence="8">
    <location>
        <begin position="89"/>
        <end position="96"/>
    </location>
</feature>
<feature type="turn" evidence="8">
    <location>
        <begin position="97"/>
        <end position="99"/>
    </location>
</feature>
<feature type="strand" evidence="8">
    <location>
        <begin position="104"/>
        <end position="115"/>
    </location>
</feature>
<feature type="strand" evidence="8">
    <location>
        <begin position="118"/>
        <end position="130"/>
    </location>
</feature>
<feature type="strand" evidence="8">
    <location>
        <begin position="137"/>
        <end position="139"/>
    </location>
</feature>
<feature type="helix" evidence="8">
    <location>
        <begin position="143"/>
        <end position="145"/>
    </location>
</feature>
<feature type="strand" evidence="8">
    <location>
        <begin position="146"/>
        <end position="148"/>
    </location>
</feature>
<feature type="helix" evidence="8">
    <location>
        <begin position="155"/>
        <end position="157"/>
    </location>
</feature>
<feature type="helix" evidence="8">
    <location>
        <begin position="160"/>
        <end position="164"/>
    </location>
</feature>
<feature type="helix" evidence="8">
    <location>
        <begin position="168"/>
        <end position="184"/>
    </location>
</feature>
<keyword id="KW-0002">3D-structure</keyword>
<keyword id="KW-0378">Hydrolase</keyword>
<keyword id="KW-0460">Magnesium</keyword>
<keyword id="KW-0464">Manganese</keyword>
<keyword id="KW-0479">Metal-binding</keyword>
<keyword id="KW-0546">Nucleotide metabolism</keyword>
<keyword id="KW-0547">Nucleotide-binding</keyword>
<gene>
    <name type="ordered locus">PH1917</name>
</gene>
<name>IXTPA_PYRHO</name>
<proteinExistence type="evidence at protein level"/>
<comment type="function">
    <text evidence="1 4">Pyrophosphatase that catalyzes the hydrolysis of nucleoside triphosphates to their monophosphate derivatives, with a high preference for the non-canonical purine nucleotides XTP (xanthosine triphosphate), dITP (deoxyinosine triphosphate) and ITP. Seems to function as a house-cleaning enzyme that removes non-canonical purine nucleotides from the nucleotide pool, thus preventing their incorporation into DNA/RNA and avoiding chromosomal lesions.</text>
</comment>
<comment type="catalytic activity">
    <reaction evidence="1">
        <text>XTP + H2O = XMP + diphosphate + H(+)</text>
        <dbReference type="Rhea" id="RHEA:28610"/>
        <dbReference type="ChEBI" id="CHEBI:15377"/>
        <dbReference type="ChEBI" id="CHEBI:15378"/>
        <dbReference type="ChEBI" id="CHEBI:33019"/>
        <dbReference type="ChEBI" id="CHEBI:57464"/>
        <dbReference type="ChEBI" id="CHEBI:61314"/>
        <dbReference type="EC" id="3.6.1.66"/>
    </reaction>
</comment>
<comment type="catalytic activity">
    <reaction evidence="1">
        <text>dITP + H2O = dIMP + diphosphate + H(+)</text>
        <dbReference type="Rhea" id="RHEA:28342"/>
        <dbReference type="ChEBI" id="CHEBI:15377"/>
        <dbReference type="ChEBI" id="CHEBI:15378"/>
        <dbReference type="ChEBI" id="CHEBI:33019"/>
        <dbReference type="ChEBI" id="CHEBI:61194"/>
        <dbReference type="ChEBI" id="CHEBI:61382"/>
        <dbReference type="EC" id="3.6.1.66"/>
    </reaction>
</comment>
<comment type="catalytic activity">
    <reaction evidence="1">
        <text>ITP + H2O = IMP + diphosphate + H(+)</text>
        <dbReference type="Rhea" id="RHEA:29399"/>
        <dbReference type="ChEBI" id="CHEBI:15377"/>
        <dbReference type="ChEBI" id="CHEBI:15378"/>
        <dbReference type="ChEBI" id="CHEBI:33019"/>
        <dbReference type="ChEBI" id="CHEBI:58053"/>
        <dbReference type="ChEBI" id="CHEBI:61402"/>
        <dbReference type="EC" id="3.6.1.66"/>
    </reaction>
</comment>
<comment type="cofactor">
    <cofactor evidence="1 4">
        <name>Mg(2+)</name>
        <dbReference type="ChEBI" id="CHEBI:18420"/>
    </cofactor>
    <cofactor evidence="4">
        <name>Mn(2+)</name>
        <dbReference type="ChEBI" id="CHEBI:29035"/>
    </cofactor>
    <text evidence="4">Binds 1 divalent metal cation per subunit; can use either Mg(2+) or Mn(2+).</text>
</comment>
<comment type="subunit">
    <text evidence="2 3">Homodimer.</text>
</comment>
<comment type="similarity">
    <text evidence="1">Belongs to the HAM1 NTPase family.</text>
</comment>
<accession>O59580</accession>
<organism>
    <name type="scientific">Pyrococcus horikoshii (strain ATCC 700860 / DSM 12428 / JCM 9974 / NBRC 100139 / OT-3)</name>
    <dbReference type="NCBI Taxonomy" id="70601"/>
    <lineage>
        <taxon>Archaea</taxon>
        <taxon>Methanobacteriati</taxon>
        <taxon>Methanobacteriota</taxon>
        <taxon>Thermococci</taxon>
        <taxon>Thermococcales</taxon>
        <taxon>Thermococcaceae</taxon>
        <taxon>Pyrococcus</taxon>
    </lineage>
</organism>
<protein>
    <recommendedName>
        <fullName evidence="1">dITP/XTP pyrophosphatase</fullName>
        <ecNumber evidence="1">3.6.1.66</ecNumber>
    </recommendedName>
    <alternativeName>
        <fullName evidence="1">Non-canonical purine NTP pyrophosphatase</fullName>
    </alternativeName>
    <alternativeName>
        <fullName evidence="1">Non-standard purine NTP pyrophosphatase</fullName>
    </alternativeName>
    <alternativeName>
        <fullName evidence="1">Nucleoside-triphosphate diphosphatase</fullName>
    </alternativeName>
    <alternativeName>
        <fullName evidence="1">Nucleoside-triphosphate pyrophosphatase</fullName>
        <shortName evidence="1">NTPase</shortName>
    </alternativeName>
</protein>
<reference key="1">
    <citation type="journal article" date="1998" name="DNA Res.">
        <title>Complete sequence and gene organization of the genome of a hyper-thermophilic archaebacterium, Pyrococcus horikoshii OT3.</title>
        <authorList>
            <person name="Kawarabayasi Y."/>
            <person name="Sawada M."/>
            <person name="Horikawa H."/>
            <person name="Haikawa Y."/>
            <person name="Hino Y."/>
            <person name="Yamamoto S."/>
            <person name="Sekine M."/>
            <person name="Baba S."/>
            <person name="Kosugi H."/>
            <person name="Hosoyama A."/>
            <person name="Nagai Y."/>
            <person name="Sakai M."/>
            <person name="Ogura K."/>
            <person name="Otsuka R."/>
            <person name="Nakazawa H."/>
            <person name="Takamiya M."/>
            <person name="Ohfuku Y."/>
            <person name="Funahashi T."/>
            <person name="Tanaka T."/>
            <person name="Kudoh Y."/>
            <person name="Yamazaki J."/>
            <person name="Kushida N."/>
            <person name="Oguchi A."/>
            <person name="Aoki K."/>
            <person name="Yoshizawa T."/>
            <person name="Nakamura Y."/>
            <person name="Robb F.T."/>
            <person name="Horikoshi K."/>
            <person name="Masuchi Y."/>
            <person name="Shizuya H."/>
            <person name="Kikuchi H."/>
        </authorList>
    </citation>
    <scope>NUCLEOTIDE SEQUENCE [LARGE SCALE GENOMIC DNA]</scope>
    <source>
        <strain>ATCC 700860 / DSM 12428 / JCM 9974 / NBRC 100139 / OT-3</strain>
    </source>
</reference>
<reference key="2">
    <citation type="submission" date="2006-12" db="PDB data bank">
        <title>Structure of nucleotide triphosphate pyrophosphatase from Pyrococcus horikoshii OT3.</title>
        <authorList>
            <consortium name="RIKEN structural genomics initiative (RSGI)"/>
        </authorList>
    </citation>
    <scope>X-RAY CRYSTALLOGRAPHY (2.00 ANGSTROMS) IN COMPLEX WITH ITP</scope>
    <source>
        <strain>ATCC 700860 / DSM 12428 / JCM 9974 / NBRC 100139 / OT-3</strain>
    </source>
</reference>
<reference key="3">
    <citation type="journal article" date="2008" name="J. Mol. Biol.">
        <title>Structures of dimeric nonstandard nucleotide triphosphate pyrophosphatase from Pyrococcus horikoshii OT3: functional significance of interprotomer conformational changes.</title>
        <authorList>
            <person name="Lokanath N.K."/>
            <person name="Pampa K.J."/>
            <person name="Takio K."/>
            <person name="Kunishima N."/>
        </authorList>
    </citation>
    <scope>X-RAY CRYSTALLOGRAPHY (1.40 ANGSTROMS) OF APOENZYME AND IN COMPLEXES WITH ITP; IMP AND MN(2+)</scope>
    <scope>FUNCTION</scope>
    <scope>COFACTOR</scope>
    <scope>SUBUNIT</scope>
    <source>
        <strain>ATCC 700860 / DSM 12428 / JCM 9974 / NBRC 100139 / OT-3</strain>
    </source>
</reference>
<evidence type="ECO:0000255" key="1">
    <source>
        <dbReference type="HAMAP-Rule" id="MF_01405"/>
    </source>
</evidence>
<evidence type="ECO:0000269" key="2">
    <source>
    </source>
</evidence>
<evidence type="ECO:0000269" key="3">
    <source ref="2"/>
</evidence>
<evidence type="ECO:0000305" key="4">
    <source>
    </source>
</evidence>
<evidence type="ECO:0007744" key="5">
    <source>
        <dbReference type="PDB" id="2DVO"/>
    </source>
</evidence>
<evidence type="ECO:0007744" key="6">
    <source>
        <dbReference type="PDB" id="2E5X"/>
    </source>
</evidence>
<evidence type="ECO:0007744" key="7">
    <source>
        <dbReference type="PDB" id="2ZTI"/>
    </source>
</evidence>
<evidence type="ECO:0007829" key="8">
    <source>
        <dbReference type="PDB" id="1V7R"/>
    </source>
</evidence>
<sequence length="186" mass="21205">MKIFFITSNPGKVREVANFLGTFGIEIVQLKHEYPEIQAEKLEDVVDFGISWLKGKVPEPFMIEDSGLFIESLKGFPGVYSSYVYRTIGLEGILKLMEGAEDRRAYFKSVIGFYIDGKAYKFSGVTWGRISNEKRGTHGFGYDPIFIPEGSEKTFAEMTIEEKNALSHRGKALKAFFEWLKVNLKY</sequence>
<dbReference type="EC" id="3.6.1.66" evidence="1"/>
<dbReference type="EMBL" id="BA000001">
    <property type="protein sequence ID" value="BAA31042.1"/>
    <property type="molecule type" value="Genomic_DNA"/>
</dbReference>
<dbReference type="PIR" id="C71206">
    <property type="entry name" value="C71206"/>
</dbReference>
<dbReference type="RefSeq" id="WP_010885982.1">
    <property type="nucleotide sequence ID" value="NC_000961.1"/>
</dbReference>
<dbReference type="PDB" id="1V7R">
    <property type="method" value="X-ray"/>
    <property type="resolution" value="1.40 A"/>
    <property type="chains" value="A=1-186"/>
</dbReference>
<dbReference type="PDB" id="2DVN">
    <property type="method" value="X-ray"/>
    <property type="resolution" value="1.60 A"/>
    <property type="chains" value="A/B=1-186"/>
</dbReference>
<dbReference type="PDB" id="2DVO">
    <property type="method" value="X-ray"/>
    <property type="resolution" value="2.21 A"/>
    <property type="chains" value="A=1-186"/>
</dbReference>
<dbReference type="PDB" id="2DVP">
    <property type="method" value="X-ray"/>
    <property type="resolution" value="1.90 A"/>
    <property type="chains" value="A=1-186"/>
</dbReference>
<dbReference type="PDB" id="2E5X">
    <property type="method" value="X-ray"/>
    <property type="resolution" value="2.00 A"/>
    <property type="chains" value="A=1-186"/>
</dbReference>
<dbReference type="PDB" id="2ZTI">
    <property type="method" value="X-ray"/>
    <property type="resolution" value="2.60 A"/>
    <property type="chains" value="A=1-186"/>
</dbReference>
<dbReference type="PDBsum" id="1V7R"/>
<dbReference type="PDBsum" id="2DVN"/>
<dbReference type="PDBsum" id="2DVO"/>
<dbReference type="PDBsum" id="2DVP"/>
<dbReference type="PDBsum" id="2E5X"/>
<dbReference type="PDBsum" id="2ZTI"/>
<dbReference type="SMR" id="O59580"/>
<dbReference type="STRING" id="70601.gene:9378927"/>
<dbReference type="EnsemblBacteria" id="BAA31042">
    <property type="protein sequence ID" value="BAA31042"/>
    <property type="gene ID" value="BAA31042"/>
</dbReference>
<dbReference type="GeneID" id="1442764"/>
<dbReference type="KEGG" id="pho:PH1917"/>
<dbReference type="eggNOG" id="arCOG04184">
    <property type="taxonomic scope" value="Archaea"/>
</dbReference>
<dbReference type="OrthoDB" id="372108at2157"/>
<dbReference type="BRENDA" id="3.6.1.66">
    <property type="organism ID" value="5244"/>
</dbReference>
<dbReference type="EvolutionaryTrace" id="O59580"/>
<dbReference type="Proteomes" id="UP000000752">
    <property type="component" value="Chromosome"/>
</dbReference>
<dbReference type="GO" id="GO:0005737">
    <property type="term" value="C:cytoplasm"/>
    <property type="evidence" value="ECO:0007669"/>
    <property type="project" value="TreeGrafter"/>
</dbReference>
<dbReference type="GO" id="GO:0035870">
    <property type="term" value="F:dITP diphosphatase activity"/>
    <property type="evidence" value="ECO:0007669"/>
    <property type="project" value="RHEA"/>
</dbReference>
<dbReference type="GO" id="GO:0036220">
    <property type="term" value="F:ITP diphosphatase activity"/>
    <property type="evidence" value="ECO:0007669"/>
    <property type="project" value="UniProtKB-EC"/>
</dbReference>
<dbReference type="GO" id="GO:0046872">
    <property type="term" value="F:metal ion binding"/>
    <property type="evidence" value="ECO:0007669"/>
    <property type="project" value="UniProtKB-KW"/>
</dbReference>
<dbReference type="GO" id="GO:0000166">
    <property type="term" value="F:nucleotide binding"/>
    <property type="evidence" value="ECO:0007669"/>
    <property type="project" value="UniProtKB-KW"/>
</dbReference>
<dbReference type="GO" id="GO:0017111">
    <property type="term" value="F:ribonucleoside triphosphate phosphatase activity"/>
    <property type="evidence" value="ECO:0007669"/>
    <property type="project" value="InterPro"/>
</dbReference>
<dbReference type="GO" id="GO:0036222">
    <property type="term" value="F:XTP diphosphatase activity"/>
    <property type="evidence" value="ECO:0007669"/>
    <property type="project" value="RHEA"/>
</dbReference>
<dbReference type="GO" id="GO:0009117">
    <property type="term" value="P:nucleotide metabolic process"/>
    <property type="evidence" value="ECO:0007669"/>
    <property type="project" value="UniProtKB-KW"/>
</dbReference>
<dbReference type="GO" id="GO:0009146">
    <property type="term" value="P:purine nucleoside triphosphate catabolic process"/>
    <property type="evidence" value="ECO:0007669"/>
    <property type="project" value="UniProtKB-UniRule"/>
</dbReference>
<dbReference type="CDD" id="cd00515">
    <property type="entry name" value="HAM1"/>
    <property type="match status" value="1"/>
</dbReference>
<dbReference type="FunFam" id="3.90.950.10:FF:000001">
    <property type="entry name" value="dITP/XTP pyrophosphatase"/>
    <property type="match status" value="1"/>
</dbReference>
<dbReference type="Gene3D" id="3.90.950.10">
    <property type="match status" value="1"/>
</dbReference>
<dbReference type="HAMAP" id="MF_01405">
    <property type="entry name" value="Non_canon_purine_NTPase"/>
    <property type="match status" value="1"/>
</dbReference>
<dbReference type="InterPro" id="IPR020922">
    <property type="entry name" value="dITP/XTP_pyrophosphatase"/>
</dbReference>
<dbReference type="InterPro" id="IPR029001">
    <property type="entry name" value="ITPase-like_fam"/>
</dbReference>
<dbReference type="InterPro" id="IPR002637">
    <property type="entry name" value="RdgB/HAM1"/>
</dbReference>
<dbReference type="NCBIfam" id="NF011396">
    <property type="entry name" value="PRK14821.1"/>
    <property type="match status" value="1"/>
</dbReference>
<dbReference type="NCBIfam" id="TIGR00042">
    <property type="entry name" value="RdgB/HAM1 family non-canonical purine NTP pyrophosphatase"/>
    <property type="match status" value="1"/>
</dbReference>
<dbReference type="PANTHER" id="PTHR11067:SF9">
    <property type="entry name" value="INOSINE TRIPHOSPHATE PYROPHOSPHATASE"/>
    <property type="match status" value="1"/>
</dbReference>
<dbReference type="PANTHER" id="PTHR11067">
    <property type="entry name" value="INOSINE TRIPHOSPHATE PYROPHOSPHATASE/HAM1 PROTEIN"/>
    <property type="match status" value="1"/>
</dbReference>
<dbReference type="Pfam" id="PF01725">
    <property type="entry name" value="Ham1p_like"/>
    <property type="match status" value="1"/>
</dbReference>
<dbReference type="SUPFAM" id="SSF52972">
    <property type="entry name" value="ITPase-like"/>
    <property type="match status" value="1"/>
</dbReference>